<reference key="1">
    <citation type="journal article" date="2000" name="DNA Res.">
        <title>Complete genome structure of the nitrogen-fixing symbiotic bacterium Mesorhizobium loti.</title>
        <authorList>
            <person name="Kaneko T."/>
            <person name="Nakamura Y."/>
            <person name="Sato S."/>
            <person name="Asamizu E."/>
            <person name="Kato T."/>
            <person name="Sasamoto S."/>
            <person name="Watanabe A."/>
            <person name="Idesawa K."/>
            <person name="Ishikawa A."/>
            <person name="Kawashima K."/>
            <person name="Kimura T."/>
            <person name="Kishida Y."/>
            <person name="Kiyokawa C."/>
            <person name="Kohara M."/>
            <person name="Matsumoto M."/>
            <person name="Matsuno A."/>
            <person name="Mochizuki Y."/>
            <person name="Nakayama S."/>
            <person name="Nakazaki N."/>
            <person name="Shimpo S."/>
            <person name="Sugimoto M."/>
            <person name="Takeuchi C."/>
            <person name="Yamada M."/>
            <person name="Tabata S."/>
        </authorList>
    </citation>
    <scope>NUCLEOTIDE SEQUENCE [LARGE SCALE GENOMIC DNA]</scope>
    <source>
        <strain>LMG 29417 / CECT 9101 / MAFF 303099</strain>
    </source>
</reference>
<organism>
    <name type="scientific">Mesorhizobium japonicum (strain LMG 29417 / CECT 9101 / MAFF 303099)</name>
    <name type="common">Mesorhizobium loti (strain MAFF 303099)</name>
    <dbReference type="NCBI Taxonomy" id="266835"/>
    <lineage>
        <taxon>Bacteria</taxon>
        <taxon>Pseudomonadati</taxon>
        <taxon>Pseudomonadota</taxon>
        <taxon>Alphaproteobacteria</taxon>
        <taxon>Hyphomicrobiales</taxon>
        <taxon>Phyllobacteriaceae</taxon>
        <taxon>Mesorhizobium</taxon>
    </lineage>
</organism>
<keyword id="KW-0030">Aminoacyl-tRNA synthetase</keyword>
<keyword id="KW-0067">ATP-binding</keyword>
<keyword id="KW-0963">Cytoplasm</keyword>
<keyword id="KW-0436">Ligase</keyword>
<keyword id="KW-0547">Nucleotide-binding</keyword>
<keyword id="KW-0648">Protein biosynthesis</keyword>
<sequence>MATERYNPRASEPKWQKAWAEKKLFEARNDDPKPKYYVLEMFPYPSGRIHIGHTRNYTMGDVVARYKRAKGFNVLHPMGWDAFGMPAENAAMQNKVHPKEWTYQNIATMREQLKVMGLSLDWAREFATCDVDYYHRQQMLFLDFVEKGLVTRKSSKVNWDPEDMTVLANEQVIDGRGWRSGALVEQRELTQWFFKITDFAQDLLDSLEGLDEWPEKVKLMQQNWIGRSEGLLIRWPLASDVAGEHELEVYTTRPDTIFGASFMAVAADHPLAKKAAETNPALAKFIDEVRHMGTSVAALETAEKKGFDTGIRVVHPFDDSWTLPVYVANFVLMEYGTGAIFGCPSGDQRDLDFANKYGLPVIPVVMPEGGDAKSFQITEEAYVDDGVMINSRFLDGMKPDRAFDEVAKLLEQKTIGNRPMAERKVNFRLRDWGISRQRYWGCPIPMIHCEDCGVVPVPKADLPVKLPDDVDFDRPGNPLDRHPTWRHVKCPQCGRDARRETDTMDTFVDSSWYFARFTAPWAYEPTDPRAANEWLPVDQYIGGIEHAILHLLYSRFFTRAMRATGHVDLAEPFKGLFTQGMVVHETYRVGGASNNGRWLSPAEVRIEDAEGKRRAIEIATGEEAAIGSLEKMSKSKKNTVSPEDITDGYGADTARWLMLSDSPPEGDVEWTDDGAAGAHRFMQRIWRLVSTAAETLAGVKPAAADSGEAGAVRKATHKILKAVGEDIEKLGFNRAIARIYELANVLTTPLNQVAEGKADPALQGACREAVEILVHLIAPVMPHLAEECWETLGGTDLVAERPWPAFDPALVVDNEVTYPVQVNGKKRGDLTIARDADQGAVEKAVLALDFVQKALEGKAPRKVIIVPQRIVNVVA</sequence>
<evidence type="ECO:0000255" key="1">
    <source>
        <dbReference type="HAMAP-Rule" id="MF_00049"/>
    </source>
</evidence>
<name>SYL_RHILO</name>
<feature type="chain" id="PRO_0000152070" description="Leucine--tRNA ligase">
    <location>
        <begin position="1"/>
        <end position="875"/>
    </location>
</feature>
<feature type="short sequence motif" description="'HIGH' region">
    <location>
        <begin position="43"/>
        <end position="53"/>
    </location>
</feature>
<feature type="short sequence motif" description="'KMSKS' region">
    <location>
        <begin position="631"/>
        <end position="635"/>
    </location>
</feature>
<feature type="binding site" evidence="1">
    <location>
        <position position="634"/>
    </location>
    <ligand>
        <name>ATP</name>
        <dbReference type="ChEBI" id="CHEBI:30616"/>
    </ligand>
</feature>
<comment type="catalytic activity">
    <reaction evidence="1">
        <text>tRNA(Leu) + L-leucine + ATP = L-leucyl-tRNA(Leu) + AMP + diphosphate</text>
        <dbReference type="Rhea" id="RHEA:11688"/>
        <dbReference type="Rhea" id="RHEA-COMP:9613"/>
        <dbReference type="Rhea" id="RHEA-COMP:9622"/>
        <dbReference type="ChEBI" id="CHEBI:30616"/>
        <dbReference type="ChEBI" id="CHEBI:33019"/>
        <dbReference type="ChEBI" id="CHEBI:57427"/>
        <dbReference type="ChEBI" id="CHEBI:78442"/>
        <dbReference type="ChEBI" id="CHEBI:78494"/>
        <dbReference type="ChEBI" id="CHEBI:456215"/>
        <dbReference type="EC" id="6.1.1.4"/>
    </reaction>
</comment>
<comment type="subcellular location">
    <subcellularLocation>
        <location evidence="1">Cytoplasm</location>
    </subcellularLocation>
</comment>
<comment type="similarity">
    <text evidence="1">Belongs to the class-I aminoacyl-tRNA synthetase family.</text>
</comment>
<gene>
    <name evidence="1" type="primary">leuS</name>
    <name type="ordered locus">mll4077</name>
</gene>
<accession>Q98EU7</accession>
<dbReference type="EC" id="6.1.1.4" evidence="1"/>
<dbReference type="EMBL" id="BA000012">
    <property type="protein sequence ID" value="BAB50820.1"/>
    <property type="molecule type" value="Genomic_DNA"/>
</dbReference>
<dbReference type="RefSeq" id="WP_010912163.1">
    <property type="nucleotide sequence ID" value="NC_002678.2"/>
</dbReference>
<dbReference type="SMR" id="Q98EU7"/>
<dbReference type="KEGG" id="mlo:mll4077"/>
<dbReference type="PATRIC" id="fig|266835.9.peg.3225"/>
<dbReference type="eggNOG" id="COG0495">
    <property type="taxonomic scope" value="Bacteria"/>
</dbReference>
<dbReference type="HOGENOM" id="CLU_004427_0_0_5"/>
<dbReference type="Proteomes" id="UP000000552">
    <property type="component" value="Chromosome"/>
</dbReference>
<dbReference type="GO" id="GO:0005829">
    <property type="term" value="C:cytosol"/>
    <property type="evidence" value="ECO:0007669"/>
    <property type="project" value="TreeGrafter"/>
</dbReference>
<dbReference type="GO" id="GO:0002161">
    <property type="term" value="F:aminoacyl-tRNA deacylase activity"/>
    <property type="evidence" value="ECO:0007669"/>
    <property type="project" value="InterPro"/>
</dbReference>
<dbReference type="GO" id="GO:0005524">
    <property type="term" value="F:ATP binding"/>
    <property type="evidence" value="ECO:0007669"/>
    <property type="project" value="UniProtKB-UniRule"/>
</dbReference>
<dbReference type="GO" id="GO:0004823">
    <property type="term" value="F:leucine-tRNA ligase activity"/>
    <property type="evidence" value="ECO:0007669"/>
    <property type="project" value="UniProtKB-UniRule"/>
</dbReference>
<dbReference type="GO" id="GO:0006429">
    <property type="term" value="P:leucyl-tRNA aminoacylation"/>
    <property type="evidence" value="ECO:0007669"/>
    <property type="project" value="UniProtKB-UniRule"/>
</dbReference>
<dbReference type="CDD" id="cd07958">
    <property type="entry name" value="Anticodon_Ia_Leu_BEm"/>
    <property type="match status" value="1"/>
</dbReference>
<dbReference type="CDD" id="cd00812">
    <property type="entry name" value="LeuRS_core"/>
    <property type="match status" value="1"/>
</dbReference>
<dbReference type="FunFam" id="1.10.730.10:FF:000002">
    <property type="entry name" value="Leucine--tRNA ligase"/>
    <property type="match status" value="1"/>
</dbReference>
<dbReference type="FunFam" id="3.40.50.620:FF:000003">
    <property type="entry name" value="Leucine--tRNA ligase"/>
    <property type="match status" value="1"/>
</dbReference>
<dbReference type="Gene3D" id="2.20.28.290">
    <property type="match status" value="1"/>
</dbReference>
<dbReference type="Gene3D" id="3.10.20.590">
    <property type="match status" value="1"/>
</dbReference>
<dbReference type="Gene3D" id="3.40.50.620">
    <property type="entry name" value="HUPs"/>
    <property type="match status" value="2"/>
</dbReference>
<dbReference type="Gene3D" id="1.10.730.10">
    <property type="entry name" value="Isoleucyl-tRNA Synthetase, Domain 1"/>
    <property type="match status" value="1"/>
</dbReference>
<dbReference type="HAMAP" id="MF_00049_B">
    <property type="entry name" value="Leu_tRNA_synth_B"/>
    <property type="match status" value="1"/>
</dbReference>
<dbReference type="InterPro" id="IPR001412">
    <property type="entry name" value="aa-tRNA-synth_I_CS"/>
</dbReference>
<dbReference type="InterPro" id="IPR002300">
    <property type="entry name" value="aa-tRNA-synth_Ia"/>
</dbReference>
<dbReference type="InterPro" id="IPR002302">
    <property type="entry name" value="Leu-tRNA-ligase"/>
</dbReference>
<dbReference type="InterPro" id="IPR025709">
    <property type="entry name" value="Leu_tRNA-synth_edit"/>
</dbReference>
<dbReference type="InterPro" id="IPR013155">
    <property type="entry name" value="M/V/L/I-tRNA-synth_anticd-bd"/>
</dbReference>
<dbReference type="InterPro" id="IPR015413">
    <property type="entry name" value="Methionyl/Leucyl_tRNA_Synth"/>
</dbReference>
<dbReference type="InterPro" id="IPR014729">
    <property type="entry name" value="Rossmann-like_a/b/a_fold"/>
</dbReference>
<dbReference type="InterPro" id="IPR009080">
    <property type="entry name" value="tRNAsynth_Ia_anticodon-bd"/>
</dbReference>
<dbReference type="InterPro" id="IPR009008">
    <property type="entry name" value="Val/Leu/Ile-tRNA-synth_edit"/>
</dbReference>
<dbReference type="NCBIfam" id="TIGR00396">
    <property type="entry name" value="leuS_bact"/>
    <property type="match status" value="1"/>
</dbReference>
<dbReference type="PANTHER" id="PTHR43740:SF2">
    <property type="entry name" value="LEUCINE--TRNA LIGASE, MITOCHONDRIAL"/>
    <property type="match status" value="1"/>
</dbReference>
<dbReference type="PANTHER" id="PTHR43740">
    <property type="entry name" value="LEUCYL-TRNA SYNTHETASE"/>
    <property type="match status" value="1"/>
</dbReference>
<dbReference type="Pfam" id="PF08264">
    <property type="entry name" value="Anticodon_1"/>
    <property type="match status" value="1"/>
</dbReference>
<dbReference type="Pfam" id="PF00133">
    <property type="entry name" value="tRNA-synt_1"/>
    <property type="match status" value="2"/>
</dbReference>
<dbReference type="Pfam" id="PF13603">
    <property type="entry name" value="tRNA-synt_1_2"/>
    <property type="match status" value="1"/>
</dbReference>
<dbReference type="Pfam" id="PF09334">
    <property type="entry name" value="tRNA-synt_1g"/>
    <property type="match status" value="1"/>
</dbReference>
<dbReference type="PRINTS" id="PR00985">
    <property type="entry name" value="TRNASYNTHLEU"/>
</dbReference>
<dbReference type="SUPFAM" id="SSF47323">
    <property type="entry name" value="Anticodon-binding domain of a subclass of class I aminoacyl-tRNA synthetases"/>
    <property type="match status" value="1"/>
</dbReference>
<dbReference type="SUPFAM" id="SSF52374">
    <property type="entry name" value="Nucleotidylyl transferase"/>
    <property type="match status" value="1"/>
</dbReference>
<dbReference type="SUPFAM" id="SSF50677">
    <property type="entry name" value="ValRS/IleRS/LeuRS editing domain"/>
    <property type="match status" value="1"/>
</dbReference>
<dbReference type="PROSITE" id="PS00178">
    <property type="entry name" value="AA_TRNA_LIGASE_I"/>
    <property type="match status" value="1"/>
</dbReference>
<protein>
    <recommendedName>
        <fullName evidence="1">Leucine--tRNA ligase</fullName>
        <ecNumber evidence="1">6.1.1.4</ecNumber>
    </recommendedName>
    <alternativeName>
        <fullName evidence="1">Leucyl-tRNA synthetase</fullName>
        <shortName evidence="1">LeuRS</shortName>
    </alternativeName>
</protein>
<proteinExistence type="inferred from homology"/>